<protein>
    <recommendedName>
        <fullName>Dosage compensation protein dpy-30</fullName>
    </recommendedName>
    <alternativeName>
        <fullName>Protein dumpy-30</fullName>
    </alternativeName>
</protein>
<accession>Q10661</accession>
<organism>
    <name type="scientific">Caenorhabditis elegans</name>
    <dbReference type="NCBI Taxonomy" id="6239"/>
    <lineage>
        <taxon>Eukaryota</taxon>
        <taxon>Metazoa</taxon>
        <taxon>Ecdysozoa</taxon>
        <taxon>Nematoda</taxon>
        <taxon>Chromadorea</taxon>
        <taxon>Rhabditida</taxon>
        <taxon>Rhabditina</taxon>
        <taxon>Rhabditomorpha</taxon>
        <taxon>Rhabditoidea</taxon>
        <taxon>Rhabditidae</taxon>
        <taxon>Peloderinae</taxon>
        <taxon>Caenorhabditis</taxon>
    </lineage>
</organism>
<dbReference type="EMBL" id="U21302">
    <property type="protein sequence ID" value="AAA92286.1"/>
    <property type="molecule type" value="Genomic_DNA"/>
</dbReference>
<dbReference type="EMBL" id="Z78019">
    <property type="protein sequence ID" value="CAB01452.1"/>
    <property type="molecule type" value="Genomic_DNA"/>
</dbReference>
<dbReference type="PIR" id="T28060">
    <property type="entry name" value="T28060"/>
</dbReference>
<dbReference type="RefSeq" id="NP_506058.1">
    <property type="nucleotide sequence ID" value="NM_073657.8"/>
</dbReference>
<dbReference type="SMR" id="Q10661"/>
<dbReference type="BioGRID" id="44694">
    <property type="interactions" value="17"/>
</dbReference>
<dbReference type="DIP" id="DIP-27173N"/>
<dbReference type="FunCoup" id="Q10661">
    <property type="interactions" value="752"/>
</dbReference>
<dbReference type="IntAct" id="Q10661">
    <property type="interactions" value="7"/>
</dbReference>
<dbReference type="STRING" id="6239.ZK863.6.2"/>
<dbReference type="PaxDb" id="6239-ZK863.6.3"/>
<dbReference type="PeptideAtlas" id="Q10661"/>
<dbReference type="EnsemblMetazoa" id="ZK863.6.1">
    <property type="protein sequence ID" value="ZK863.6.1"/>
    <property type="gene ID" value="WBGene00001088"/>
</dbReference>
<dbReference type="EnsemblMetazoa" id="ZK863.6.2">
    <property type="protein sequence ID" value="ZK863.6.2"/>
    <property type="gene ID" value="WBGene00001088"/>
</dbReference>
<dbReference type="GeneID" id="179671"/>
<dbReference type="KEGG" id="cel:CELE_ZK863.6"/>
<dbReference type="UCSC" id="ZK863.6.1">
    <property type="organism name" value="c. elegans"/>
</dbReference>
<dbReference type="AGR" id="WB:WBGene00001088"/>
<dbReference type="CTD" id="179671"/>
<dbReference type="WormBase" id="ZK863.6">
    <property type="protein sequence ID" value="CE15445"/>
    <property type="gene ID" value="WBGene00001088"/>
    <property type="gene designation" value="dpy-30"/>
</dbReference>
<dbReference type="eggNOG" id="KOG4109">
    <property type="taxonomic scope" value="Eukaryota"/>
</dbReference>
<dbReference type="GeneTree" id="ENSGT01030000238170"/>
<dbReference type="HOGENOM" id="CLU_135823_2_0_1"/>
<dbReference type="InParanoid" id="Q10661"/>
<dbReference type="OMA" id="GCDENNA"/>
<dbReference type="OrthoDB" id="417678at2759"/>
<dbReference type="PhylomeDB" id="Q10661"/>
<dbReference type="PRO" id="PR:Q10661"/>
<dbReference type="Proteomes" id="UP000001940">
    <property type="component" value="Chromosome V"/>
</dbReference>
<dbReference type="Bgee" id="WBGene00001088">
    <property type="expression patterns" value="Expressed in embryo and 3 other cell types or tissues"/>
</dbReference>
<dbReference type="GO" id="GO:0005634">
    <property type="term" value="C:nucleus"/>
    <property type="evidence" value="ECO:0000314"/>
    <property type="project" value="WormBase"/>
</dbReference>
<dbReference type="GO" id="GO:0042464">
    <property type="term" value="P:dosage compensation by hypoactivation of X chromosome"/>
    <property type="evidence" value="ECO:0000315"/>
    <property type="project" value="WormBase"/>
</dbReference>
<dbReference type="GO" id="GO:0040011">
    <property type="term" value="P:locomotion"/>
    <property type="evidence" value="ECO:0000315"/>
    <property type="project" value="WormBase"/>
</dbReference>
<dbReference type="GO" id="GO:0045138">
    <property type="term" value="P:nematode male tail tip morphogenesis"/>
    <property type="evidence" value="ECO:0000315"/>
    <property type="project" value="WormBase"/>
</dbReference>
<dbReference type="GO" id="GO:0040014">
    <property type="term" value="P:regulation of multicellular organism growth"/>
    <property type="evidence" value="ECO:0000315"/>
    <property type="project" value="WormBase"/>
</dbReference>
<dbReference type="GO" id="GO:0060290">
    <property type="term" value="P:transdifferentiation"/>
    <property type="evidence" value="ECO:0000315"/>
    <property type="project" value="WormBase"/>
</dbReference>
<dbReference type="CDD" id="cd22965">
    <property type="entry name" value="DD_DPY30_SDC1"/>
    <property type="match status" value="1"/>
</dbReference>
<dbReference type="FunFam" id="1.20.890.10:FF:000003">
    <property type="entry name" value="protein dpy-30 homolog"/>
    <property type="match status" value="1"/>
</dbReference>
<dbReference type="Gene3D" id="1.20.890.10">
    <property type="entry name" value="cAMP-dependent protein kinase regulatory subunit, dimerization-anchoring domain"/>
    <property type="match status" value="1"/>
</dbReference>
<dbReference type="InterPro" id="IPR007858">
    <property type="entry name" value="Dpy-30_motif"/>
</dbReference>
<dbReference type="InterPro" id="IPR049629">
    <property type="entry name" value="DPY30_SDC1_DD"/>
</dbReference>
<dbReference type="Pfam" id="PF05186">
    <property type="entry name" value="Dpy-30"/>
    <property type="match status" value="1"/>
</dbReference>
<reference key="1">
    <citation type="journal article" date="1995" name="Development">
        <title>DPY-30, a nuclear protein essential early in embryogenesis for Caenorhabditis elegans dosage compensation.</title>
        <authorList>
            <person name="Hsu D.R."/>
            <person name="Chuang P.-T."/>
            <person name="Meyer B.J."/>
        </authorList>
    </citation>
    <scope>NUCLEOTIDE SEQUENCE [GENOMIC DNA]</scope>
    <scope>FUNCTION</scope>
    <scope>SUBCELLULAR LOCATION</scope>
    <scope>DEVELOPMENTAL STAGE</scope>
    <source>
        <strain>Bristol N2</strain>
    </source>
</reference>
<reference key="2">
    <citation type="journal article" date="1998" name="Science">
        <title>Genome sequence of the nematode C. elegans: a platform for investigating biology.</title>
        <authorList>
            <consortium name="The C. elegans sequencing consortium"/>
        </authorList>
    </citation>
    <scope>NUCLEOTIDE SEQUENCE [LARGE SCALE GENOMIC DNA]</scope>
    <source>
        <strain>Bristol N2</strain>
    </source>
</reference>
<reference key="3">
    <citation type="journal article" date="1996" name="Science">
        <title>DPY-26, a link between dosage compensation and meiotic chromosome segregation in the nematode.</title>
        <authorList>
            <person name="Lieb J.D."/>
            <person name="Capowski E.E."/>
            <person name="Meneely P."/>
            <person name="Meyer B.J."/>
        </authorList>
    </citation>
    <scope>FUNCTION</scope>
</reference>
<reference key="4">
    <citation type="journal article" date="2013" name="Development">
        <title>A non-canonical role for the C. elegans dosage compensation complex in growth and metabolic regulation downstream of TOR complex 2.</title>
        <authorList>
            <person name="Webster C.M."/>
            <person name="Wu L."/>
            <person name="Douglas D."/>
            <person name="Soukas A.A."/>
        </authorList>
    </citation>
    <scope>FUNCTION</scope>
    <scope>DISRUPTION PHENOTYPE</scope>
</reference>
<reference key="5">
    <citation type="journal article" date="2014" name="Science">
        <title>Sequential histone-modifying activities determine the robustness of transdifferentiation.</title>
        <authorList>
            <person name="Zuryn S."/>
            <person name="Ahier A."/>
            <person name="Portoso M."/>
            <person name="White E.R."/>
            <person name="Morin M.C."/>
            <person name="Margueron R."/>
            <person name="Jarriault S."/>
        </authorList>
    </citation>
    <scope>FUNCTION</scope>
    <scope>INTERACTION WITH JMJD-3.1</scope>
    <scope>DISRUPTION PHENOTYPE</scope>
</reference>
<reference evidence="7" key="6">
    <citation type="journal article" date="2019" name="Nucleic Acids Res.">
        <title>Physical and functional interaction between SET1/COMPASS complex component CFP-1 and a Sin3S HDAC complex in C. elegans.</title>
        <authorList>
            <person name="Beurton F."/>
            <person name="Stempor P."/>
            <person name="Caron M."/>
            <person name="Appert A."/>
            <person name="Dong Y."/>
            <person name="Chen R.A."/>
            <person name="Cluet D."/>
            <person name="Coute Y."/>
            <person name="Herbette M."/>
            <person name="Huang N."/>
            <person name="Polveche H."/>
            <person name="Spichty M."/>
            <person name="Bedet C."/>
            <person name="Ahringer J."/>
            <person name="Palladino F."/>
        </authorList>
    </citation>
    <scope>IDENTIFICATION IN THE SET2 COMPLEX</scope>
    <scope>INTERACTION WITH CFP-1 AND WDR-5.1</scope>
    <scope>IDENTIFICATION BY MASS SPECTROMETRY</scope>
</reference>
<sequence length="123" mass="12837">MADQTASAEVATEKMDTAEAPAAAPAASAAAPAEAESNENTTVPSNVLSANGGQQTGNQSAPRNTSTVPTRQYLDSTVVPILLQGLGALAKDRPENPIEFLANFLLREKDRYNAENQNPAGQQ</sequence>
<gene>
    <name type="primary">dpy-30</name>
    <name type="ORF">ZK863.6</name>
</gene>
<comment type="function">
    <text evidence="2 3 5 6">Essential for dosage compensation (PubMed:7588066). Required for the sex-specific association of the dosage compensation complex proteins dpy-27 and dpy-26 with the hermaphrodite X chromosomes (PubMed:7588066, PubMed:8939869). Plays a role in developmental rate and body fat regulation downstream of the TOR complex 2 (PubMed:23884442). Required for the robust transdifferentiation of the Y rectal cell to the PDA motor neuron during larval development (PubMed:25124442).</text>
</comment>
<comment type="subunit">
    <text evidence="3 4">Component of the SET2 complex (also known as the SET1/COMPASS complex), which contains at least set-2, swd-2.1, cfp-1, rbbp-5, wdr-5.1, dpy-30 and ash-2 (PubMed:31602465). Within the complex, interacts with cfp-1 and wdr-5.1 (PubMed:31602465). Interacts with jmjd-3.1 (PubMed:25124442).</text>
</comment>
<comment type="subcellular location">
    <subcellularLocation>
        <location evidence="5">Nucleus</location>
    </subcellularLocation>
</comment>
<comment type="developmental stage">
    <text evidence="5">Expressed both maternally and zygotically in all stages.</text>
</comment>
<comment type="disruption phenotype">
    <text evidence="2 3">RNAi-mediated knockdown suppresses the growth delay and elevated body fat index of the TOR complex 2 mutant rict-1 (PubMed:23884442). Results in disruption of the invariant transdifferentiation of the Y rectal cell to the PDA motor neuron (PubMed:25124442).</text>
</comment>
<comment type="similarity">
    <text evidence="7">Belongs to the dpy-30 family.</text>
</comment>
<keyword id="KW-0539">Nucleus</keyword>
<keyword id="KW-1185">Reference proteome</keyword>
<proteinExistence type="evidence at protein level"/>
<name>DPY30_CAEEL</name>
<feature type="chain" id="PRO_0000114682" description="Dosage compensation protein dpy-30">
    <location>
        <begin position="1"/>
        <end position="123"/>
    </location>
</feature>
<feature type="region of interest" description="Disordered" evidence="1">
    <location>
        <begin position="1"/>
        <end position="73"/>
    </location>
</feature>
<feature type="compositionally biased region" description="Low complexity" evidence="1">
    <location>
        <begin position="18"/>
        <end position="35"/>
    </location>
</feature>
<feature type="compositionally biased region" description="Polar residues" evidence="1">
    <location>
        <begin position="38"/>
        <end position="73"/>
    </location>
</feature>
<evidence type="ECO:0000256" key="1">
    <source>
        <dbReference type="SAM" id="MobiDB-lite"/>
    </source>
</evidence>
<evidence type="ECO:0000269" key="2">
    <source>
    </source>
</evidence>
<evidence type="ECO:0000269" key="3">
    <source>
    </source>
</evidence>
<evidence type="ECO:0000269" key="4">
    <source>
    </source>
</evidence>
<evidence type="ECO:0000269" key="5">
    <source>
    </source>
</evidence>
<evidence type="ECO:0000269" key="6">
    <source>
    </source>
</evidence>
<evidence type="ECO:0000305" key="7"/>